<dbReference type="EC" id="6.1.1.14" evidence="1"/>
<dbReference type="EMBL" id="CP000703">
    <property type="protein sequence ID" value="ABQ49416.1"/>
    <property type="molecule type" value="Genomic_DNA"/>
</dbReference>
<dbReference type="RefSeq" id="WP_001030080.1">
    <property type="nucleotide sequence ID" value="NC_009487.1"/>
</dbReference>
<dbReference type="SMR" id="A5IT93"/>
<dbReference type="KEGG" id="saj:SaurJH9_1623"/>
<dbReference type="HOGENOM" id="CLU_015515_2_1_9"/>
<dbReference type="GO" id="GO:0005737">
    <property type="term" value="C:cytoplasm"/>
    <property type="evidence" value="ECO:0007669"/>
    <property type="project" value="UniProtKB-SubCell"/>
</dbReference>
<dbReference type="GO" id="GO:0005524">
    <property type="term" value="F:ATP binding"/>
    <property type="evidence" value="ECO:0007669"/>
    <property type="project" value="UniProtKB-UniRule"/>
</dbReference>
<dbReference type="GO" id="GO:0140096">
    <property type="term" value="F:catalytic activity, acting on a protein"/>
    <property type="evidence" value="ECO:0007669"/>
    <property type="project" value="UniProtKB-ARBA"/>
</dbReference>
<dbReference type="GO" id="GO:0004820">
    <property type="term" value="F:glycine-tRNA ligase activity"/>
    <property type="evidence" value="ECO:0000250"/>
    <property type="project" value="UniProtKB"/>
</dbReference>
<dbReference type="GO" id="GO:0046983">
    <property type="term" value="F:protein dimerization activity"/>
    <property type="evidence" value="ECO:0000250"/>
    <property type="project" value="UniProtKB"/>
</dbReference>
<dbReference type="GO" id="GO:0016740">
    <property type="term" value="F:transferase activity"/>
    <property type="evidence" value="ECO:0007669"/>
    <property type="project" value="UniProtKB-ARBA"/>
</dbReference>
<dbReference type="GO" id="GO:0006426">
    <property type="term" value="P:glycyl-tRNA aminoacylation"/>
    <property type="evidence" value="ECO:0007669"/>
    <property type="project" value="UniProtKB-UniRule"/>
</dbReference>
<dbReference type="CDD" id="cd00774">
    <property type="entry name" value="GlyRS-like_core"/>
    <property type="match status" value="1"/>
</dbReference>
<dbReference type="CDD" id="cd00858">
    <property type="entry name" value="GlyRS_anticodon"/>
    <property type="match status" value="1"/>
</dbReference>
<dbReference type="FunFam" id="3.40.50.800:FF:000002">
    <property type="entry name" value="Glycine--tRNA ligase"/>
    <property type="match status" value="1"/>
</dbReference>
<dbReference type="Gene3D" id="3.30.40.230">
    <property type="match status" value="1"/>
</dbReference>
<dbReference type="Gene3D" id="3.40.50.800">
    <property type="entry name" value="Anticodon-binding domain"/>
    <property type="match status" value="1"/>
</dbReference>
<dbReference type="Gene3D" id="3.30.930.10">
    <property type="entry name" value="Bira Bifunctional Protein, Domain 2"/>
    <property type="match status" value="1"/>
</dbReference>
<dbReference type="HAMAP" id="MF_00253_B">
    <property type="entry name" value="Gly_tRNA_synth_B"/>
    <property type="match status" value="1"/>
</dbReference>
<dbReference type="InterPro" id="IPR002314">
    <property type="entry name" value="aa-tRNA-synt_IIb"/>
</dbReference>
<dbReference type="InterPro" id="IPR006195">
    <property type="entry name" value="aa-tRNA-synth_II"/>
</dbReference>
<dbReference type="InterPro" id="IPR045864">
    <property type="entry name" value="aa-tRNA-synth_II/BPL/LPL"/>
</dbReference>
<dbReference type="InterPro" id="IPR004154">
    <property type="entry name" value="Anticodon-bd"/>
</dbReference>
<dbReference type="InterPro" id="IPR036621">
    <property type="entry name" value="Anticodon-bd_dom_sf"/>
</dbReference>
<dbReference type="InterPro" id="IPR027031">
    <property type="entry name" value="Gly-tRNA_synthase/POLG2"/>
</dbReference>
<dbReference type="InterPro" id="IPR022961">
    <property type="entry name" value="Gly_tRNA_ligase_bac"/>
</dbReference>
<dbReference type="InterPro" id="IPR033731">
    <property type="entry name" value="GlyRS-like_core"/>
</dbReference>
<dbReference type="InterPro" id="IPR002315">
    <property type="entry name" value="tRNA-synt_gly"/>
</dbReference>
<dbReference type="NCBIfam" id="TIGR00389">
    <property type="entry name" value="glyS_dimeric"/>
    <property type="match status" value="1"/>
</dbReference>
<dbReference type="NCBIfam" id="NF003211">
    <property type="entry name" value="PRK04173.1"/>
    <property type="match status" value="1"/>
</dbReference>
<dbReference type="PANTHER" id="PTHR10745:SF8">
    <property type="entry name" value="DNA POLYMERASE SUBUNIT GAMMA-2, MITOCHONDRIAL"/>
    <property type="match status" value="1"/>
</dbReference>
<dbReference type="PANTHER" id="PTHR10745">
    <property type="entry name" value="GLYCYL-TRNA SYNTHETASE/DNA POLYMERASE SUBUNIT GAMMA-2"/>
    <property type="match status" value="1"/>
</dbReference>
<dbReference type="Pfam" id="PF03129">
    <property type="entry name" value="HGTP_anticodon"/>
    <property type="match status" value="1"/>
</dbReference>
<dbReference type="Pfam" id="PF00587">
    <property type="entry name" value="tRNA-synt_2b"/>
    <property type="match status" value="1"/>
</dbReference>
<dbReference type="PRINTS" id="PR01043">
    <property type="entry name" value="TRNASYNTHGLY"/>
</dbReference>
<dbReference type="SUPFAM" id="SSF52954">
    <property type="entry name" value="Class II aaRS ABD-related"/>
    <property type="match status" value="1"/>
</dbReference>
<dbReference type="SUPFAM" id="SSF55681">
    <property type="entry name" value="Class II aaRS and biotin synthetases"/>
    <property type="match status" value="1"/>
</dbReference>
<dbReference type="PROSITE" id="PS50862">
    <property type="entry name" value="AA_TRNA_LIGASE_II"/>
    <property type="match status" value="1"/>
</dbReference>
<sequence>MAKDMDTIVSLAKHRGFVFPGSDIYGGLSNTWDYGPLGVELKNNVKKAWWQKFITQSPFNVGIDAAILMNPKVWEASGHLNNFNDPMIDNKDSKIRYRADKLIEDYMQDVKGDENFIADGLSFEQMKKIIDDEGIVCPVSKTANWTEIRQFNLMFKTFQGVTEDSTNEIFLRPETAQGIFVNYKNVQRSMRKKLPFGIGQIGKSFRNEITPGNFIFRTREFEQMELEFFCKPGEEIEWQNYWKTFASDWLTSLNMSSENMRLRDHDEDELSHYSNATTDIEYKFPFGWGELWGIASRTDFDLRKHAEHSGEDFRYHDPETNEKYIPYCIEPSLGADRVTLAFLCDAYDEEGVEGSKDARTVLHFHPALAPYKAAILPLSKKLSGEAIKIFEQLSSKFSIDFDESQSIGKRYRRQDEIGTPYCVTFDFDSLEDNQVTVRDRDSMEQVRMPISELEAFLTEKTKF</sequence>
<comment type="function">
    <text evidence="1">Catalyzes the attachment of glycine to tRNA(Gly).</text>
</comment>
<comment type="catalytic activity">
    <reaction evidence="1">
        <text>tRNA(Gly) + glycine + ATP = glycyl-tRNA(Gly) + AMP + diphosphate</text>
        <dbReference type="Rhea" id="RHEA:16013"/>
        <dbReference type="Rhea" id="RHEA-COMP:9664"/>
        <dbReference type="Rhea" id="RHEA-COMP:9683"/>
        <dbReference type="ChEBI" id="CHEBI:30616"/>
        <dbReference type="ChEBI" id="CHEBI:33019"/>
        <dbReference type="ChEBI" id="CHEBI:57305"/>
        <dbReference type="ChEBI" id="CHEBI:78442"/>
        <dbReference type="ChEBI" id="CHEBI:78522"/>
        <dbReference type="ChEBI" id="CHEBI:456215"/>
        <dbReference type="EC" id="6.1.1.14"/>
    </reaction>
</comment>
<comment type="subunit">
    <text evidence="1">Homodimer.</text>
</comment>
<comment type="subcellular location">
    <subcellularLocation>
        <location evidence="1">Cytoplasm</location>
    </subcellularLocation>
</comment>
<comment type="similarity">
    <text evidence="1">Belongs to the class-II aminoacyl-tRNA synthetase family.</text>
</comment>
<feature type="chain" id="PRO_1000078517" description="Glycine--tRNA ligase">
    <location>
        <begin position="1"/>
        <end position="463"/>
    </location>
</feature>
<feature type="binding site" evidence="1">
    <location>
        <position position="98"/>
    </location>
    <ligand>
        <name>substrate</name>
    </ligand>
</feature>
<feature type="binding site" evidence="1">
    <location>
        <position position="174"/>
    </location>
    <ligand>
        <name>substrate</name>
    </ligand>
</feature>
<feature type="binding site" evidence="1">
    <location>
        <begin position="206"/>
        <end position="208"/>
    </location>
    <ligand>
        <name>ATP</name>
        <dbReference type="ChEBI" id="CHEBI:30616"/>
    </ligand>
</feature>
<feature type="binding site" evidence="1">
    <location>
        <begin position="216"/>
        <end position="221"/>
    </location>
    <ligand>
        <name>ATP</name>
        <dbReference type="ChEBI" id="CHEBI:30616"/>
    </ligand>
</feature>
<feature type="binding site" evidence="1">
    <location>
        <begin position="221"/>
        <end position="225"/>
    </location>
    <ligand>
        <name>substrate</name>
    </ligand>
</feature>
<feature type="binding site" evidence="1">
    <location>
        <begin position="290"/>
        <end position="291"/>
    </location>
    <ligand>
        <name>ATP</name>
        <dbReference type="ChEBI" id="CHEBI:30616"/>
    </ligand>
</feature>
<feature type="binding site" evidence="1">
    <location>
        <begin position="330"/>
        <end position="334"/>
    </location>
    <ligand>
        <name>substrate</name>
    </ligand>
</feature>
<feature type="binding site" evidence="1">
    <location>
        <begin position="334"/>
        <end position="337"/>
    </location>
    <ligand>
        <name>ATP</name>
        <dbReference type="ChEBI" id="CHEBI:30616"/>
    </ligand>
</feature>
<gene>
    <name evidence="1" type="primary">glyQS</name>
    <name type="ordered locus">SaurJH9_1623</name>
</gene>
<proteinExistence type="inferred from homology"/>
<keyword id="KW-0030">Aminoacyl-tRNA synthetase</keyword>
<keyword id="KW-0067">ATP-binding</keyword>
<keyword id="KW-0963">Cytoplasm</keyword>
<keyword id="KW-0436">Ligase</keyword>
<keyword id="KW-0547">Nucleotide-binding</keyword>
<keyword id="KW-0648">Protein biosynthesis</keyword>
<accession>A5IT93</accession>
<evidence type="ECO:0000255" key="1">
    <source>
        <dbReference type="HAMAP-Rule" id="MF_00253"/>
    </source>
</evidence>
<protein>
    <recommendedName>
        <fullName evidence="1">Glycine--tRNA ligase</fullName>
        <ecNumber evidence="1">6.1.1.14</ecNumber>
    </recommendedName>
    <alternativeName>
        <fullName evidence="1">Glycyl-tRNA synthetase</fullName>
        <shortName evidence="1">GlyRS</shortName>
    </alternativeName>
</protein>
<organism>
    <name type="scientific">Staphylococcus aureus (strain JH9)</name>
    <dbReference type="NCBI Taxonomy" id="359786"/>
    <lineage>
        <taxon>Bacteria</taxon>
        <taxon>Bacillati</taxon>
        <taxon>Bacillota</taxon>
        <taxon>Bacilli</taxon>
        <taxon>Bacillales</taxon>
        <taxon>Staphylococcaceae</taxon>
        <taxon>Staphylococcus</taxon>
    </lineage>
</organism>
<name>SYG_STAA9</name>
<reference key="1">
    <citation type="submission" date="2007-05" db="EMBL/GenBank/DDBJ databases">
        <title>Complete sequence of chromosome of Staphylococcus aureus subsp. aureus JH9.</title>
        <authorList>
            <consortium name="US DOE Joint Genome Institute"/>
            <person name="Copeland A."/>
            <person name="Lucas S."/>
            <person name="Lapidus A."/>
            <person name="Barry K."/>
            <person name="Detter J.C."/>
            <person name="Glavina del Rio T."/>
            <person name="Hammon N."/>
            <person name="Israni S."/>
            <person name="Pitluck S."/>
            <person name="Chain P."/>
            <person name="Malfatti S."/>
            <person name="Shin M."/>
            <person name="Vergez L."/>
            <person name="Schmutz J."/>
            <person name="Larimer F."/>
            <person name="Land M."/>
            <person name="Hauser L."/>
            <person name="Kyrpides N."/>
            <person name="Kim E."/>
            <person name="Tomasz A."/>
            <person name="Richardson P."/>
        </authorList>
    </citation>
    <scope>NUCLEOTIDE SEQUENCE [LARGE SCALE GENOMIC DNA]</scope>
    <source>
        <strain>JH9</strain>
    </source>
</reference>